<accession>Q68WR3</accession>
<protein>
    <recommendedName>
        <fullName evidence="1">Porphobilinogen deaminase</fullName>
        <shortName evidence="1">PBG</shortName>
        <ecNumber evidence="1">2.5.1.61</ecNumber>
    </recommendedName>
    <alternativeName>
        <fullName evidence="1">Hydroxymethylbilane synthase</fullName>
        <shortName evidence="1">HMBS</shortName>
    </alternativeName>
    <alternativeName>
        <fullName evidence="1">Pre-uroporphyrinogen synthase</fullName>
    </alternativeName>
</protein>
<comment type="function">
    <text evidence="1">Tetrapolymerization of the monopyrrole PBG into the hydroxymethylbilane pre-uroporphyrinogen in several discrete steps.</text>
</comment>
<comment type="catalytic activity">
    <reaction evidence="1">
        <text>4 porphobilinogen + H2O = hydroxymethylbilane + 4 NH4(+)</text>
        <dbReference type="Rhea" id="RHEA:13185"/>
        <dbReference type="ChEBI" id="CHEBI:15377"/>
        <dbReference type="ChEBI" id="CHEBI:28938"/>
        <dbReference type="ChEBI" id="CHEBI:57845"/>
        <dbReference type="ChEBI" id="CHEBI:58126"/>
        <dbReference type="EC" id="2.5.1.61"/>
    </reaction>
</comment>
<comment type="cofactor">
    <cofactor evidence="1">
        <name>dipyrromethane</name>
        <dbReference type="ChEBI" id="CHEBI:60342"/>
    </cofactor>
    <text evidence="1">Binds 1 dipyrromethane group covalently.</text>
</comment>
<comment type="pathway">
    <text evidence="1">Porphyrin-containing compound metabolism; protoporphyrin-IX biosynthesis; coproporphyrinogen-III from 5-aminolevulinate: step 2/4.</text>
</comment>
<comment type="subunit">
    <text evidence="1">Monomer.</text>
</comment>
<comment type="miscellaneous">
    <text evidence="1">The porphobilinogen subunits are added to the dipyrromethane group.</text>
</comment>
<comment type="similarity">
    <text evidence="1">Belongs to the HMBS family.</text>
</comment>
<evidence type="ECO:0000255" key="1">
    <source>
        <dbReference type="HAMAP-Rule" id="MF_00260"/>
    </source>
</evidence>
<sequence>MINSIRIGTRNSTLALIQTNLVIAQIKQFFPDINCEIVPIITSGDLIQNKPLYDIGGKALFLKEIEQALLDKKIDLAVHSLKDIPGRIPVDLVIAAVLEREDPRDVLVCLNYKSIETLPQNAVIGSSAVRRKAFIKKIRPDLNIKVFRGNVDSRIKKLMTGEVDATILSYAGLKRLNAFNKKYCHLIEYSQILPCVGQGVIAVEIRKDDNAMFNICNQINHIPTFELIKPERAFLEHLDANCSTPIGAYSQYLDAYNIQTDFMLGKLDCNKIIFQTEITNINTSRECGIKAAKMMLAQQ</sequence>
<gene>
    <name evidence="1" type="primary">hemC</name>
    <name type="ordered locus">RT0453</name>
</gene>
<name>HEM3_RICTY</name>
<feature type="chain" id="PRO_0000142983" description="Porphobilinogen deaminase">
    <location>
        <begin position="1"/>
        <end position="299"/>
    </location>
</feature>
<feature type="modified residue" description="S-(dipyrrolylmethanemethyl)cysteine" evidence="1">
    <location>
        <position position="242"/>
    </location>
</feature>
<organism>
    <name type="scientific">Rickettsia typhi (strain ATCC VR-144 / Wilmington)</name>
    <dbReference type="NCBI Taxonomy" id="257363"/>
    <lineage>
        <taxon>Bacteria</taxon>
        <taxon>Pseudomonadati</taxon>
        <taxon>Pseudomonadota</taxon>
        <taxon>Alphaproteobacteria</taxon>
        <taxon>Rickettsiales</taxon>
        <taxon>Rickettsiaceae</taxon>
        <taxon>Rickettsieae</taxon>
        <taxon>Rickettsia</taxon>
        <taxon>typhus group</taxon>
    </lineage>
</organism>
<proteinExistence type="inferred from homology"/>
<keyword id="KW-0627">Porphyrin biosynthesis</keyword>
<keyword id="KW-0808">Transferase</keyword>
<reference key="1">
    <citation type="journal article" date="2004" name="J. Bacteriol.">
        <title>Complete genome sequence of Rickettsia typhi and comparison with sequences of other Rickettsiae.</title>
        <authorList>
            <person name="McLeod M.P."/>
            <person name="Qin X."/>
            <person name="Karpathy S.E."/>
            <person name="Gioia J."/>
            <person name="Highlander S.K."/>
            <person name="Fox G.E."/>
            <person name="McNeill T.Z."/>
            <person name="Jiang H."/>
            <person name="Muzny D."/>
            <person name="Jacob L.S."/>
            <person name="Hawes A.C."/>
            <person name="Sodergren E."/>
            <person name="Gill R."/>
            <person name="Hume J."/>
            <person name="Morgan M."/>
            <person name="Fan G."/>
            <person name="Amin A.G."/>
            <person name="Gibbs R.A."/>
            <person name="Hong C."/>
            <person name="Yu X.-J."/>
            <person name="Walker D.H."/>
            <person name="Weinstock G.M."/>
        </authorList>
    </citation>
    <scope>NUCLEOTIDE SEQUENCE [LARGE SCALE GENOMIC DNA]</scope>
    <source>
        <strain>ATCC VR-144 / Wilmington</strain>
    </source>
</reference>
<dbReference type="EC" id="2.5.1.61" evidence="1"/>
<dbReference type="EMBL" id="AE017197">
    <property type="protein sequence ID" value="AAU03929.1"/>
    <property type="molecule type" value="Genomic_DNA"/>
</dbReference>
<dbReference type="RefSeq" id="WP_011190912.1">
    <property type="nucleotide sequence ID" value="NC_006142.1"/>
</dbReference>
<dbReference type="SMR" id="Q68WR3"/>
<dbReference type="KEGG" id="rty:RT0453"/>
<dbReference type="eggNOG" id="COG0181">
    <property type="taxonomic scope" value="Bacteria"/>
</dbReference>
<dbReference type="HOGENOM" id="CLU_019704_0_2_5"/>
<dbReference type="OrthoDB" id="9810298at2"/>
<dbReference type="UniPathway" id="UPA00251">
    <property type="reaction ID" value="UER00319"/>
</dbReference>
<dbReference type="Proteomes" id="UP000000604">
    <property type="component" value="Chromosome"/>
</dbReference>
<dbReference type="GO" id="GO:0005737">
    <property type="term" value="C:cytoplasm"/>
    <property type="evidence" value="ECO:0007669"/>
    <property type="project" value="TreeGrafter"/>
</dbReference>
<dbReference type="GO" id="GO:0004418">
    <property type="term" value="F:hydroxymethylbilane synthase activity"/>
    <property type="evidence" value="ECO:0007669"/>
    <property type="project" value="UniProtKB-UniRule"/>
</dbReference>
<dbReference type="GO" id="GO:0006782">
    <property type="term" value="P:protoporphyrinogen IX biosynthetic process"/>
    <property type="evidence" value="ECO:0007669"/>
    <property type="project" value="UniProtKB-UniRule"/>
</dbReference>
<dbReference type="CDD" id="cd13647">
    <property type="entry name" value="PBP2_PBGD_2"/>
    <property type="match status" value="1"/>
</dbReference>
<dbReference type="FunFam" id="3.40.190.10:FF:000004">
    <property type="entry name" value="Porphobilinogen deaminase"/>
    <property type="match status" value="1"/>
</dbReference>
<dbReference type="FunFam" id="3.40.190.10:FF:000005">
    <property type="entry name" value="Porphobilinogen deaminase"/>
    <property type="match status" value="1"/>
</dbReference>
<dbReference type="Gene3D" id="3.40.190.10">
    <property type="entry name" value="Periplasmic binding protein-like II"/>
    <property type="match status" value="2"/>
</dbReference>
<dbReference type="Gene3D" id="3.30.160.40">
    <property type="entry name" value="Porphobilinogen deaminase, C-terminal domain"/>
    <property type="match status" value="1"/>
</dbReference>
<dbReference type="HAMAP" id="MF_00260">
    <property type="entry name" value="Porphobil_deam"/>
    <property type="match status" value="1"/>
</dbReference>
<dbReference type="InterPro" id="IPR000860">
    <property type="entry name" value="HemC"/>
</dbReference>
<dbReference type="InterPro" id="IPR022419">
    <property type="entry name" value="Porphobilin_deaminase_cofac_BS"/>
</dbReference>
<dbReference type="InterPro" id="IPR022417">
    <property type="entry name" value="Porphobilin_deaminase_N"/>
</dbReference>
<dbReference type="InterPro" id="IPR022418">
    <property type="entry name" value="Porphobilinogen_deaminase_C"/>
</dbReference>
<dbReference type="InterPro" id="IPR036803">
    <property type="entry name" value="Porphobilinogen_deaminase_C_sf"/>
</dbReference>
<dbReference type="NCBIfam" id="TIGR00212">
    <property type="entry name" value="hemC"/>
    <property type="match status" value="1"/>
</dbReference>
<dbReference type="PANTHER" id="PTHR11557">
    <property type="entry name" value="PORPHOBILINOGEN DEAMINASE"/>
    <property type="match status" value="1"/>
</dbReference>
<dbReference type="PANTHER" id="PTHR11557:SF0">
    <property type="entry name" value="PORPHOBILINOGEN DEAMINASE"/>
    <property type="match status" value="1"/>
</dbReference>
<dbReference type="Pfam" id="PF01379">
    <property type="entry name" value="Porphobil_deam"/>
    <property type="match status" value="1"/>
</dbReference>
<dbReference type="Pfam" id="PF03900">
    <property type="entry name" value="Porphobil_deamC"/>
    <property type="match status" value="1"/>
</dbReference>
<dbReference type="PIRSF" id="PIRSF001438">
    <property type="entry name" value="4pyrrol_synth_OHMeBilane_synth"/>
    <property type="match status" value="1"/>
</dbReference>
<dbReference type="PRINTS" id="PR00151">
    <property type="entry name" value="PORPHBDMNASE"/>
</dbReference>
<dbReference type="SUPFAM" id="SSF53850">
    <property type="entry name" value="Periplasmic binding protein-like II"/>
    <property type="match status" value="1"/>
</dbReference>
<dbReference type="SUPFAM" id="SSF54782">
    <property type="entry name" value="Porphobilinogen deaminase (hydroxymethylbilane synthase), C-terminal domain"/>
    <property type="match status" value="1"/>
</dbReference>
<dbReference type="PROSITE" id="PS00533">
    <property type="entry name" value="PORPHOBILINOGEN_DEAM"/>
    <property type="match status" value="1"/>
</dbReference>